<gene>
    <name evidence="1" type="primary">rplR</name>
    <name type="ordered locus">BPEN_214</name>
</gene>
<organism>
    <name type="scientific">Blochmanniella pennsylvanica (strain BPEN)</name>
    <dbReference type="NCBI Taxonomy" id="291272"/>
    <lineage>
        <taxon>Bacteria</taxon>
        <taxon>Pseudomonadati</taxon>
        <taxon>Pseudomonadota</taxon>
        <taxon>Gammaproteobacteria</taxon>
        <taxon>Enterobacterales</taxon>
        <taxon>Enterobacteriaceae</taxon>
        <taxon>ant endosymbionts</taxon>
        <taxon>Candidatus Blochmanniella</taxon>
    </lineage>
</organism>
<keyword id="KW-1185">Reference proteome</keyword>
<keyword id="KW-0687">Ribonucleoprotein</keyword>
<keyword id="KW-0689">Ribosomal protein</keyword>
<keyword id="KW-0694">RNA-binding</keyword>
<keyword id="KW-0699">rRNA-binding</keyword>
<accession>Q493J2</accession>
<evidence type="ECO:0000255" key="1">
    <source>
        <dbReference type="HAMAP-Rule" id="MF_01337"/>
    </source>
</evidence>
<evidence type="ECO:0000305" key="2"/>
<protein>
    <recommendedName>
        <fullName evidence="1">Large ribosomal subunit protein uL18</fullName>
    </recommendedName>
    <alternativeName>
        <fullName evidence="2">50S ribosomal protein L18</fullName>
    </alternativeName>
</protein>
<sequence length="117" mass="13140">MNKKDARIKRAVKTRKKLYKLDAIRLVIHRTCRHIYAQIIAKDNSNVLVAASTTEKLISSQLTTTSNKKAAAIVGKIIAERAIKKGIINVSFDRSGFKYHGRVKMLADRARQTGLSF</sequence>
<dbReference type="EMBL" id="CP000016">
    <property type="protein sequence ID" value="AAZ40848.1"/>
    <property type="molecule type" value="Genomic_DNA"/>
</dbReference>
<dbReference type="RefSeq" id="WP_011282755.1">
    <property type="nucleotide sequence ID" value="NC_007292.1"/>
</dbReference>
<dbReference type="SMR" id="Q493J2"/>
<dbReference type="STRING" id="291272.BPEN_214"/>
<dbReference type="KEGG" id="bpn:BPEN_214"/>
<dbReference type="eggNOG" id="COG0256">
    <property type="taxonomic scope" value="Bacteria"/>
</dbReference>
<dbReference type="HOGENOM" id="CLU_098841_0_1_6"/>
<dbReference type="OrthoDB" id="9810939at2"/>
<dbReference type="Proteomes" id="UP000007794">
    <property type="component" value="Chromosome"/>
</dbReference>
<dbReference type="GO" id="GO:0022625">
    <property type="term" value="C:cytosolic large ribosomal subunit"/>
    <property type="evidence" value="ECO:0007669"/>
    <property type="project" value="TreeGrafter"/>
</dbReference>
<dbReference type="GO" id="GO:0008097">
    <property type="term" value="F:5S rRNA binding"/>
    <property type="evidence" value="ECO:0007669"/>
    <property type="project" value="TreeGrafter"/>
</dbReference>
<dbReference type="GO" id="GO:0003735">
    <property type="term" value="F:structural constituent of ribosome"/>
    <property type="evidence" value="ECO:0007669"/>
    <property type="project" value="InterPro"/>
</dbReference>
<dbReference type="GO" id="GO:0006412">
    <property type="term" value="P:translation"/>
    <property type="evidence" value="ECO:0007669"/>
    <property type="project" value="UniProtKB-UniRule"/>
</dbReference>
<dbReference type="CDD" id="cd00432">
    <property type="entry name" value="Ribosomal_L18_L5e"/>
    <property type="match status" value="1"/>
</dbReference>
<dbReference type="FunFam" id="3.30.420.100:FF:000001">
    <property type="entry name" value="50S ribosomal protein L18"/>
    <property type="match status" value="1"/>
</dbReference>
<dbReference type="Gene3D" id="3.30.420.100">
    <property type="match status" value="1"/>
</dbReference>
<dbReference type="HAMAP" id="MF_01337_B">
    <property type="entry name" value="Ribosomal_uL18_B"/>
    <property type="match status" value="1"/>
</dbReference>
<dbReference type="InterPro" id="IPR004389">
    <property type="entry name" value="Ribosomal_uL18_bac-type"/>
</dbReference>
<dbReference type="InterPro" id="IPR005484">
    <property type="entry name" value="Ribosomal_uL18_bac/euk"/>
</dbReference>
<dbReference type="NCBIfam" id="TIGR00060">
    <property type="entry name" value="L18_bact"/>
    <property type="match status" value="1"/>
</dbReference>
<dbReference type="PANTHER" id="PTHR12899">
    <property type="entry name" value="39S RIBOSOMAL PROTEIN L18, MITOCHONDRIAL"/>
    <property type="match status" value="1"/>
</dbReference>
<dbReference type="PANTHER" id="PTHR12899:SF3">
    <property type="entry name" value="LARGE RIBOSOMAL SUBUNIT PROTEIN UL18M"/>
    <property type="match status" value="1"/>
</dbReference>
<dbReference type="Pfam" id="PF00861">
    <property type="entry name" value="Ribosomal_L18p"/>
    <property type="match status" value="1"/>
</dbReference>
<dbReference type="SUPFAM" id="SSF53137">
    <property type="entry name" value="Translational machinery components"/>
    <property type="match status" value="1"/>
</dbReference>
<name>RL18_BLOPB</name>
<proteinExistence type="inferred from homology"/>
<reference key="1">
    <citation type="journal article" date="2005" name="Genome Res.">
        <title>Genome sequence of Blochmannia pennsylvanicus indicates parallel evolutionary trends among bacterial mutualists of insects.</title>
        <authorList>
            <person name="Degnan P.H."/>
            <person name="Lazarus A.B."/>
            <person name="Wernegreen J.J."/>
        </authorList>
    </citation>
    <scope>NUCLEOTIDE SEQUENCE [LARGE SCALE GENOMIC DNA]</scope>
    <source>
        <strain>BPEN</strain>
    </source>
</reference>
<feature type="chain" id="PRO_0000251289" description="Large ribosomal subunit protein uL18">
    <location>
        <begin position="1"/>
        <end position="117"/>
    </location>
</feature>
<comment type="function">
    <text evidence="1">This is one of the proteins that bind and probably mediate the attachment of the 5S RNA into the large ribosomal subunit, where it forms part of the central protuberance.</text>
</comment>
<comment type="subunit">
    <text evidence="1">Part of the 50S ribosomal subunit; part of the 5S rRNA/L5/L18/L25 subcomplex. Contacts the 5S and 23S rRNAs.</text>
</comment>
<comment type="similarity">
    <text evidence="1">Belongs to the universal ribosomal protein uL18 family.</text>
</comment>